<dbReference type="EMBL" id="AP009240">
    <property type="protein sequence ID" value="BAG78870.1"/>
    <property type="molecule type" value="Genomic_DNA"/>
</dbReference>
<dbReference type="RefSeq" id="WP_001144069.1">
    <property type="nucleotide sequence ID" value="NC_011415.1"/>
</dbReference>
<dbReference type="SMR" id="B6I437"/>
<dbReference type="GeneID" id="98390195"/>
<dbReference type="KEGG" id="ecy:ECSE_3346"/>
<dbReference type="HOGENOM" id="CLU_159258_1_0_6"/>
<dbReference type="Proteomes" id="UP000008199">
    <property type="component" value="Chromosome"/>
</dbReference>
<dbReference type="GO" id="GO:1990904">
    <property type="term" value="C:ribonucleoprotein complex"/>
    <property type="evidence" value="ECO:0007669"/>
    <property type="project" value="UniProtKB-KW"/>
</dbReference>
<dbReference type="GO" id="GO:0005840">
    <property type="term" value="C:ribosome"/>
    <property type="evidence" value="ECO:0007669"/>
    <property type="project" value="UniProtKB-KW"/>
</dbReference>
<dbReference type="GO" id="GO:0003735">
    <property type="term" value="F:structural constituent of ribosome"/>
    <property type="evidence" value="ECO:0007669"/>
    <property type="project" value="InterPro"/>
</dbReference>
<dbReference type="GO" id="GO:0006412">
    <property type="term" value="P:translation"/>
    <property type="evidence" value="ECO:0007669"/>
    <property type="project" value="UniProtKB-UniRule"/>
</dbReference>
<dbReference type="FunFam" id="1.20.5.1150:FF:000001">
    <property type="entry name" value="30S ribosomal protein S21"/>
    <property type="match status" value="1"/>
</dbReference>
<dbReference type="Gene3D" id="1.20.5.1150">
    <property type="entry name" value="Ribosomal protein S8"/>
    <property type="match status" value="1"/>
</dbReference>
<dbReference type="HAMAP" id="MF_00358">
    <property type="entry name" value="Ribosomal_bS21"/>
    <property type="match status" value="1"/>
</dbReference>
<dbReference type="InterPro" id="IPR001911">
    <property type="entry name" value="Ribosomal_bS21"/>
</dbReference>
<dbReference type="InterPro" id="IPR018278">
    <property type="entry name" value="Ribosomal_bS21_CS"/>
</dbReference>
<dbReference type="InterPro" id="IPR038380">
    <property type="entry name" value="Ribosomal_bS21_sf"/>
</dbReference>
<dbReference type="NCBIfam" id="TIGR00030">
    <property type="entry name" value="S21p"/>
    <property type="match status" value="1"/>
</dbReference>
<dbReference type="PANTHER" id="PTHR21109">
    <property type="entry name" value="MITOCHONDRIAL 28S RIBOSOMAL PROTEIN S21"/>
    <property type="match status" value="1"/>
</dbReference>
<dbReference type="PANTHER" id="PTHR21109:SF22">
    <property type="entry name" value="SMALL RIBOSOMAL SUBUNIT PROTEIN BS21"/>
    <property type="match status" value="1"/>
</dbReference>
<dbReference type="Pfam" id="PF01165">
    <property type="entry name" value="Ribosomal_S21"/>
    <property type="match status" value="1"/>
</dbReference>
<dbReference type="PRINTS" id="PR00976">
    <property type="entry name" value="RIBOSOMALS21"/>
</dbReference>
<dbReference type="PROSITE" id="PS01181">
    <property type="entry name" value="RIBOSOMAL_S21"/>
    <property type="match status" value="1"/>
</dbReference>
<evidence type="ECO:0000255" key="1">
    <source>
        <dbReference type="HAMAP-Rule" id="MF_00358"/>
    </source>
</evidence>
<evidence type="ECO:0000256" key="2">
    <source>
        <dbReference type="SAM" id="MobiDB-lite"/>
    </source>
</evidence>
<evidence type="ECO:0000305" key="3"/>
<accession>B6I437</accession>
<sequence length="71" mass="8500">MPVIKVRENEPFDVALRRFKRSCEKAGVLAEVRRREFYEKPTTERKRAKASAVKRHAKKLARENARRTRLY</sequence>
<comment type="similarity">
    <text evidence="1">Belongs to the bacterial ribosomal protein bS21 family.</text>
</comment>
<reference key="1">
    <citation type="journal article" date="2008" name="DNA Res.">
        <title>Complete genome sequence and comparative analysis of the wild-type commensal Escherichia coli strain SE11 isolated from a healthy adult.</title>
        <authorList>
            <person name="Oshima K."/>
            <person name="Toh H."/>
            <person name="Ogura Y."/>
            <person name="Sasamoto H."/>
            <person name="Morita H."/>
            <person name="Park S.-H."/>
            <person name="Ooka T."/>
            <person name="Iyoda S."/>
            <person name="Taylor T.D."/>
            <person name="Hayashi T."/>
            <person name="Itoh K."/>
            <person name="Hattori M."/>
        </authorList>
    </citation>
    <scope>NUCLEOTIDE SEQUENCE [LARGE SCALE GENOMIC DNA]</scope>
    <source>
        <strain>SE11</strain>
    </source>
</reference>
<gene>
    <name evidence="1" type="primary">rpsU</name>
    <name type="ordered locus">ECSE_3346</name>
</gene>
<protein>
    <recommendedName>
        <fullName evidence="1">Small ribosomal subunit protein bS21</fullName>
    </recommendedName>
    <alternativeName>
        <fullName evidence="3">30S ribosomal protein S21</fullName>
    </alternativeName>
</protein>
<keyword id="KW-0687">Ribonucleoprotein</keyword>
<keyword id="KW-0689">Ribosomal protein</keyword>
<organism>
    <name type="scientific">Escherichia coli (strain SE11)</name>
    <dbReference type="NCBI Taxonomy" id="409438"/>
    <lineage>
        <taxon>Bacteria</taxon>
        <taxon>Pseudomonadati</taxon>
        <taxon>Pseudomonadota</taxon>
        <taxon>Gammaproteobacteria</taxon>
        <taxon>Enterobacterales</taxon>
        <taxon>Enterobacteriaceae</taxon>
        <taxon>Escherichia</taxon>
    </lineage>
</organism>
<feature type="chain" id="PRO_1000120618" description="Small ribosomal subunit protein bS21">
    <location>
        <begin position="1"/>
        <end position="71"/>
    </location>
</feature>
<feature type="region of interest" description="Disordered" evidence="2">
    <location>
        <begin position="43"/>
        <end position="71"/>
    </location>
</feature>
<feature type="compositionally biased region" description="Basic residues" evidence="2">
    <location>
        <begin position="46"/>
        <end position="59"/>
    </location>
</feature>
<feature type="compositionally biased region" description="Basic and acidic residues" evidence="2">
    <location>
        <begin position="60"/>
        <end position="71"/>
    </location>
</feature>
<name>RS21_ECOSE</name>
<proteinExistence type="inferred from homology"/>